<sequence length="743" mass="82253">MKRRELIRTAFSTIVATAALSSVSARARSEDLHGLTLKKVPPDAIPKNDVPIFSPDDVFTMPEQFWRDFKGKLYIGKAGTDPTLPQNLIDVFVKNANGGTALLSQPIDLNSETLKTFVAAKGALWSASEYSMALHNDNDEQIFYVPDVKNNGVSEFSRRLSQPGGYQLIGEISSFASLRQTRPLFSGAKVRLKGWHDGTEVGGGAFVGEMTPSEDDGGYIASSGQDFHWRRVSDDMNRITLFDFGAVADGKKDCLPAVMAMYHWAQNNNQKLSIQFPAGRFFISSFDISAKYIRFLRLAGAPVNFGYFPATTLVSDGKSEFLFKVNARWVELSNISFEGQIEHSPNGQGFFHNICPAGQYFRGSCLRFTGVGGVSLSLIDTLDCKIDQWYASKCTGDVIRGSWSFTKKGNWDHNTAIELSNFNVQHCRQGKVLNLPRCTQSIIHNGWIEHSEFPGDLSNGQWIVDALSLEGCKNPLIAHCSRLNMRQTNLQSGSWIDNSLANDEWLSSFERGSTRVESYGIAVDGSMKYNYLTSRFRIENHSSQEKWYELGNIHTPDVGDSWEIEVFGQSQFSNGSGTKALMSVTDDRHTGGKAIINLQRKIHGFEASWSVEGSSPINDVVYTTSNDSDTRVFVKLAQWLGSAGVMIKTTAKDRFVTGHCARFDSRMVHSEPPKGEKVHSAVRRFSLHNGLAGIGANEQGDLLVESRHIDAAKVETSRAEGYISLVINGQQVAVPYFALKQNS</sequence>
<dbReference type="EMBL" id="X77921">
    <property type="protein sequence ID" value="CAA54887.2"/>
    <property type="molecule type" value="Genomic_DNA"/>
</dbReference>
<dbReference type="PIR" id="S61899">
    <property type="entry name" value="S52146"/>
</dbReference>
<dbReference type="RefSeq" id="WP_004162445.1">
    <property type="nucleotide sequence ID" value="NZ_RQKG01000006.1"/>
</dbReference>
<dbReference type="SMR" id="Q46636"/>
<dbReference type="OMA" id="ICVQFPA"/>
<dbReference type="UniPathway" id="UPA00631"/>
<dbReference type="GO" id="GO:0042597">
    <property type="term" value="C:periplasmic space"/>
    <property type="evidence" value="ECO:0007669"/>
    <property type="project" value="UniProtKB-SubCell"/>
</dbReference>
<dbReference type="GO" id="GO:0000271">
    <property type="term" value="P:polysaccharide biosynthetic process"/>
    <property type="evidence" value="ECO:0007669"/>
    <property type="project" value="UniProtKB-KW"/>
</dbReference>
<dbReference type="Gene3D" id="2.170.14.10">
    <property type="entry name" value="Phage P22 tailspike-like, N-terminal domain"/>
    <property type="match status" value="1"/>
</dbReference>
<dbReference type="Gene3D" id="2.160.20.10">
    <property type="entry name" value="Single-stranded right-handed beta-helix, Pectin lyase-like"/>
    <property type="match status" value="1"/>
</dbReference>
<dbReference type="InterPro" id="IPR009093">
    <property type="entry name" value="P22_tailspike_N"/>
</dbReference>
<dbReference type="InterPro" id="IPR036730">
    <property type="entry name" value="P22_tailspike_N_sf"/>
</dbReference>
<dbReference type="InterPro" id="IPR012334">
    <property type="entry name" value="Pectin_lyas_fold"/>
</dbReference>
<dbReference type="InterPro" id="IPR011050">
    <property type="entry name" value="Pectin_lyase_fold/virulence"/>
</dbReference>
<dbReference type="Pfam" id="PF09008">
    <property type="entry name" value="Head_binding"/>
    <property type="match status" value="1"/>
</dbReference>
<dbReference type="SUPFAM" id="SSF51327">
    <property type="entry name" value="Head-binding domain of phage P22 tailspike protein"/>
    <property type="match status" value="1"/>
</dbReference>
<dbReference type="SUPFAM" id="SSF51126">
    <property type="entry name" value="Pectin lyase-like"/>
    <property type="match status" value="1"/>
</dbReference>
<evidence type="ECO:0000255" key="1"/>
<evidence type="ECO:0000305" key="2"/>
<comment type="function">
    <text>Involved in the biosynthesis of amylovoran which functions as a virulence factor. May be involved in the polymerization or late modification of the repeating units.</text>
</comment>
<comment type="pathway">
    <text>Glycan metabolism; exopolysaccharide biosynthesis.</text>
</comment>
<comment type="subcellular location">
    <subcellularLocation>
        <location evidence="2">Periplasm</location>
    </subcellularLocation>
</comment>
<comment type="similarity">
    <text evidence="2">To R.meliloti ExoP.</text>
</comment>
<accession>Q46636</accession>
<name>AMSF_ERWAM</name>
<proteinExistence type="inferred from homology"/>
<gene>
    <name type="primary">amsF</name>
</gene>
<feature type="signal peptide" evidence="1">
    <location>
        <begin position="1"/>
        <end position="27"/>
    </location>
</feature>
<feature type="chain" id="PRO_0000020727" description="Amylovoran biosynthesis protein AmsF">
    <location>
        <begin position="28"/>
        <end position="743"/>
    </location>
</feature>
<reference key="1">
    <citation type="journal article" date="1995" name="Mol. Microbiol.">
        <title>Molecular analysis of the ams operon required for exopolysaccharide synthesis of Erwinia amylovora.</title>
        <authorList>
            <person name="Bugert P."/>
            <person name="Geider K."/>
        </authorList>
    </citation>
    <scope>NUCLEOTIDE SEQUENCE [GENOMIC DNA]</scope>
    <source>
        <strain>EA1/79</strain>
    </source>
</reference>
<reference key="2">
    <citation type="submission" date="2011-08" db="EMBL/GenBank/DDBJ databases">
        <authorList>
            <person name="Geider K.K."/>
        </authorList>
    </citation>
    <scope>SEQUENCE REVISION TO 314; 343; 477; 511; 534 AND 630</scope>
</reference>
<protein>
    <recommendedName>
        <fullName>Amylovoran biosynthesis protein AmsF</fullName>
    </recommendedName>
</protein>
<organism>
    <name type="scientific">Erwinia amylovora</name>
    <name type="common">Fire blight bacteria</name>
    <dbReference type="NCBI Taxonomy" id="552"/>
    <lineage>
        <taxon>Bacteria</taxon>
        <taxon>Pseudomonadati</taxon>
        <taxon>Pseudomonadota</taxon>
        <taxon>Gammaproteobacteria</taxon>
        <taxon>Enterobacterales</taxon>
        <taxon>Erwiniaceae</taxon>
        <taxon>Erwinia</taxon>
    </lineage>
</organism>
<keyword id="KW-0270">Exopolysaccharide synthesis</keyword>
<keyword id="KW-0574">Periplasm</keyword>
<keyword id="KW-0732">Signal</keyword>
<keyword id="KW-0843">Virulence</keyword>